<reference key="1">
    <citation type="journal article" date="2002" name="Proc. Natl. Acad. Sci. U.S.A.">
        <title>The genome sequence of Bifidobacterium longum reflects its adaptation to the human gastrointestinal tract.</title>
        <authorList>
            <person name="Schell M.A."/>
            <person name="Karmirantzou M."/>
            <person name="Snel B."/>
            <person name="Vilanova D."/>
            <person name="Berger B."/>
            <person name="Pessi G."/>
            <person name="Zwahlen M.-C."/>
            <person name="Desiere F."/>
            <person name="Bork P."/>
            <person name="Delley M."/>
            <person name="Pridmore R.D."/>
            <person name="Arigoni F."/>
        </authorList>
    </citation>
    <scope>NUCLEOTIDE SEQUENCE [LARGE SCALE GENOMIC DNA]</scope>
    <source>
        <strain>NCC 2705</strain>
    </source>
</reference>
<name>PRMC_BIFLO</name>
<evidence type="ECO:0000255" key="1">
    <source>
        <dbReference type="HAMAP-Rule" id="MF_02126"/>
    </source>
</evidence>
<feature type="chain" id="PRO_0000414502" description="Release factor glutamine methyltransferase">
    <location>
        <begin position="1"/>
        <end position="294"/>
    </location>
</feature>
<feature type="binding site" evidence="1">
    <location>
        <position position="148"/>
    </location>
    <ligand>
        <name>S-adenosyl-L-methionine</name>
        <dbReference type="ChEBI" id="CHEBI:59789"/>
    </ligand>
</feature>
<feature type="binding site" evidence="1">
    <location>
        <begin position="201"/>
        <end position="204"/>
    </location>
    <ligand>
        <name>substrate</name>
    </ligand>
</feature>
<feature type="binding site" evidence="1">
    <location>
        <position position="201"/>
    </location>
    <ligand>
        <name>S-adenosyl-L-methionine</name>
        <dbReference type="ChEBI" id="CHEBI:59789"/>
    </ligand>
</feature>
<dbReference type="EC" id="2.1.1.297" evidence="1"/>
<dbReference type="EMBL" id="AE014295">
    <property type="protein sequence ID" value="AAN25497.1"/>
    <property type="molecule type" value="Genomic_DNA"/>
</dbReference>
<dbReference type="RefSeq" id="NP_696861.1">
    <property type="nucleotide sequence ID" value="NC_004307.2"/>
</dbReference>
<dbReference type="SMR" id="Q8G3P4"/>
<dbReference type="STRING" id="206672.BL1713"/>
<dbReference type="EnsemblBacteria" id="AAN25497">
    <property type="protein sequence ID" value="AAN25497"/>
    <property type="gene ID" value="BL1713"/>
</dbReference>
<dbReference type="KEGG" id="blo:BL1713"/>
<dbReference type="PATRIC" id="fig|206672.9.peg.1766"/>
<dbReference type="HOGENOM" id="CLU_018398_4_0_11"/>
<dbReference type="OrthoDB" id="9800643at2"/>
<dbReference type="PhylomeDB" id="Q8G3P4"/>
<dbReference type="Proteomes" id="UP000000439">
    <property type="component" value="Chromosome"/>
</dbReference>
<dbReference type="GO" id="GO:0003676">
    <property type="term" value="F:nucleic acid binding"/>
    <property type="evidence" value="ECO:0007669"/>
    <property type="project" value="InterPro"/>
</dbReference>
<dbReference type="GO" id="GO:0102559">
    <property type="term" value="F:protein-(glutamine-N5) methyltransferase activity"/>
    <property type="evidence" value="ECO:0007669"/>
    <property type="project" value="UniProtKB-EC"/>
</dbReference>
<dbReference type="GO" id="GO:0036009">
    <property type="term" value="F:protein-glutamine N-methyltransferase activity"/>
    <property type="evidence" value="ECO:0007669"/>
    <property type="project" value="UniProtKB-UniRule"/>
</dbReference>
<dbReference type="GO" id="GO:0032259">
    <property type="term" value="P:methylation"/>
    <property type="evidence" value="ECO:0007669"/>
    <property type="project" value="UniProtKB-KW"/>
</dbReference>
<dbReference type="CDD" id="cd02440">
    <property type="entry name" value="AdoMet_MTases"/>
    <property type="match status" value="1"/>
</dbReference>
<dbReference type="Gene3D" id="1.10.8.10">
    <property type="entry name" value="DNA helicase RuvA subunit, C-terminal domain"/>
    <property type="match status" value="1"/>
</dbReference>
<dbReference type="Gene3D" id="3.40.50.150">
    <property type="entry name" value="Vaccinia Virus protein VP39"/>
    <property type="match status" value="1"/>
</dbReference>
<dbReference type="HAMAP" id="MF_02126">
    <property type="entry name" value="RF_methyltr_PrmC"/>
    <property type="match status" value="1"/>
</dbReference>
<dbReference type="InterPro" id="IPR002052">
    <property type="entry name" value="DNA_methylase_N6_adenine_CS"/>
</dbReference>
<dbReference type="InterPro" id="IPR004556">
    <property type="entry name" value="HemK-like"/>
</dbReference>
<dbReference type="InterPro" id="IPR050320">
    <property type="entry name" value="N5-glutamine_MTase"/>
</dbReference>
<dbReference type="InterPro" id="IPR040758">
    <property type="entry name" value="PrmC_N"/>
</dbReference>
<dbReference type="InterPro" id="IPR019874">
    <property type="entry name" value="RF_methyltr_PrmC"/>
</dbReference>
<dbReference type="InterPro" id="IPR029063">
    <property type="entry name" value="SAM-dependent_MTases_sf"/>
</dbReference>
<dbReference type="NCBIfam" id="TIGR00536">
    <property type="entry name" value="hemK_fam"/>
    <property type="match status" value="1"/>
</dbReference>
<dbReference type="NCBIfam" id="TIGR03534">
    <property type="entry name" value="RF_mod_PrmC"/>
    <property type="match status" value="1"/>
</dbReference>
<dbReference type="PANTHER" id="PTHR18895">
    <property type="entry name" value="HEMK METHYLTRANSFERASE"/>
    <property type="match status" value="1"/>
</dbReference>
<dbReference type="PANTHER" id="PTHR18895:SF74">
    <property type="entry name" value="MTRF1L RELEASE FACTOR GLUTAMINE METHYLTRANSFERASE"/>
    <property type="match status" value="1"/>
</dbReference>
<dbReference type="Pfam" id="PF03602">
    <property type="entry name" value="Cons_hypoth95"/>
    <property type="match status" value="1"/>
</dbReference>
<dbReference type="Pfam" id="PF17827">
    <property type="entry name" value="PrmC_N"/>
    <property type="match status" value="1"/>
</dbReference>
<dbReference type="SUPFAM" id="SSF53335">
    <property type="entry name" value="S-adenosyl-L-methionine-dependent methyltransferases"/>
    <property type="match status" value="1"/>
</dbReference>
<protein>
    <recommendedName>
        <fullName evidence="1">Release factor glutamine methyltransferase</fullName>
        <shortName evidence="1">RF MTase</shortName>
        <ecNumber evidence="1">2.1.1.297</ecNumber>
    </recommendedName>
    <alternativeName>
        <fullName evidence="1">N5-glutamine methyltransferase PrmC</fullName>
    </alternativeName>
    <alternativeName>
        <fullName evidence="1">Protein-(glutamine-N5) MTase PrmC</fullName>
    </alternativeName>
    <alternativeName>
        <fullName evidence="1">Protein-glutamine N-methyltransferase PrmC</fullName>
    </alternativeName>
</protein>
<proteinExistence type="inferred from homology"/>
<accession>Q8G3P4</accession>
<sequence>MLITDIINQASSQLREAGIETPEHDAKLLLAEAAGVELRDVDRALLMGEELGTTGQLAVFRAMLDRRAKREPLQYITGHAPFRYLDLKVGPGVFIPRPETETVVQAGLDWLTKNGMIHPCVVDLCAGSGAIGLSVVSEVPGSQVWAVELSPNTAEWTRRNLSETAKKYPSIASNYHLEIADATSFATLAQLDGTVDIVITNPPYVPQTDIPEQPEVRDWDPELALYGGSMDGTLIPERIIERACRLLKPGGVLVMEHDVTQGDRLVAFARATGFAAASTGQDWTGRDRYLFAVS</sequence>
<organism>
    <name type="scientific">Bifidobacterium longum (strain NCC 2705)</name>
    <dbReference type="NCBI Taxonomy" id="206672"/>
    <lineage>
        <taxon>Bacteria</taxon>
        <taxon>Bacillati</taxon>
        <taxon>Actinomycetota</taxon>
        <taxon>Actinomycetes</taxon>
        <taxon>Bifidobacteriales</taxon>
        <taxon>Bifidobacteriaceae</taxon>
        <taxon>Bifidobacterium</taxon>
    </lineage>
</organism>
<gene>
    <name evidence="1" type="primary">prmC</name>
    <name type="ordered locus">BL1713</name>
</gene>
<keyword id="KW-0489">Methyltransferase</keyword>
<keyword id="KW-1185">Reference proteome</keyword>
<keyword id="KW-0949">S-adenosyl-L-methionine</keyword>
<keyword id="KW-0808">Transferase</keyword>
<comment type="function">
    <text evidence="1">Methylates the class 1 translation termination release factors RF1/PrfA and RF2/PrfB on the glutamine residue of the universally conserved GGQ motif.</text>
</comment>
<comment type="catalytic activity">
    <reaction evidence="1">
        <text>L-glutaminyl-[peptide chain release factor] + S-adenosyl-L-methionine = N(5)-methyl-L-glutaminyl-[peptide chain release factor] + S-adenosyl-L-homocysteine + H(+)</text>
        <dbReference type="Rhea" id="RHEA:42896"/>
        <dbReference type="Rhea" id="RHEA-COMP:10271"/>
        <dbReference type="Rhea" id="RHEA-COMP:10272"/>
        <dbReference type="ChEBI" id="CHEBI:15378"/>
        <dbReference type="ChEBI" id="CHEBI:30011"/>
        <dbReference type="ChEBI" id="CHEBI:57856"/>
        <dbReference type="ChEBI" id="CHEBI:59789"/>
        <dbReference type="ChEBI" id="CHEBI:61891"/>
        <dbReference type="EC" id="2.1.1.297"/>
    </reaction>
</comment>
<comment type="similarity">
    <text evidence="1">Belongs to the protein N5-glutamine methyltransferase family. PrmC subfamily.</text>
</comment>